<protein>
    <recommendedName>
        <fullName>Myocardial zonula adherens protein</fullName>
    </recommendedName>
    <alternativeName>
        <fullName>GRINL1A upstream protein</fullName>
        <shortName>Gup</shortName>
    </alternativeName>
</protein>
<organism>
    <name type="scientific">Homo sapiens</name>
    <name type="common">Human</name>
    <dbReference type="NCBI Taxonomy" id="9606"/>
    <lineage>
        <taxon>Eukaryota</taxon>
        <taxon>Metazoa</taxon>
        <taxon>Chordata</taxon>
        <taxon>Craniata</taxon>
        <taxon>Vertebrata</taxon>
        <taxon>Euteleostomi</taxon>
        <taxon>Mammalia</taxon>
        <taxon>Eutheria</taxon>
        <taxon>Euarchontoglires</taxon>
        <taxon>Primates</taxon>
        <taxon>Haplorrhini</taxon>
        <taxon>Catarrhini</taxon>
        <taxon>Hominidae</taxon>
        <taxon>Homo</taxon>
    </lineage>
</organism>
<feature type="signal peptide" evidence="3">
    <location>
        <begin position="1"/>
        <end position="20"/>
    </location>
</feature>
<feature type="chain" id="PRO_0000376013" description="Myocardial zonula adherens protein">
    <location>
        <begin position="21"/>
        <end position="466"/>
    </location>
</feature>
<feature type="region of interest" description="Disordered" evidence="4">
    <location>
        <begin position="1"/>
        <end position="23"/>
    </location>
</feature>
<feature type="coiled-coil region" evidence="3">
    <location>
        <begin position="96"/>
        <end position="142"/>
    </location>
</feature>
<feature type="coiled-coil region" evidence="3">
    <location>
        <begin position="174"/>
        <end position="418"/>
    </location>
</feature>
<feature type="short sequence motif" description="Required for DYNLL1-binding">
    <location>
        <begin position="424"/>
        <end position="425"/>
    </location>
</feature>
<feature type="compositionally biased region" description="Polar residues" evidence="4">
    <location>
        <begin position="1"/>
        <end position="10"/>
    </location>
</feature>
<feature type="splice variant" id="VSP_037389" description="In isoform 10." evidence="15">
    <location>
        <begin position="107"/>
        <end position="175"/>
    </location>
</feature>
<feature type="splice variant" id="VSP_037390" description="In isoform 9 and isoform 3." evidence="15">
    <location>
        <begin position="108"/>
        <end position="138"/>
    </location>
</feature>
<feature type="splice variant" id="VSP_037391" description="In isoform 8." evidence="15">
    <original>IESLKKKLQQKQLLILQLLEKISFLEGENNELQSRLDYLTETQAKTEVETREIGVGCDLLPSQTGRTREIVMPSRNYTPYTRVLELTMKKTLT</original>
    <variation>VTFSTK</variation>
    <location>
        <begin position="374"/>
        <end position="466"/>
    </location>
</feature>
<feature type="splice variant" id="VSP_037392" description="In isoform 4 and isoform 9." evidence="15">
    <location>
        <begin position="374"/>
        <end position="401"/>
    </location>
</feature>
<feature type="splice variant" id="VSP_037393" description="In isoform 5." evidence="15">
    <original>ESLKKKLQQKQLLILQLLEKISFLEGENNELQSRLDYLTETQAKTEVETREIGVGCDLLPSQTGRTREIVMPSRNYTPYTRVLELTMKKTLT</original>
    <variation>MSHELFSRFSLRLFGR</variation>
    <location>
        <begin position="375"/>
        <end position="466"/>
    </location>
</feature>
<feature type="splice variant" id="VSP_037394" description="In isoform 6." evidence="15">
    <original>NNELQSRLDYLTETQAKTEVETREIGVGCDLLPSQTGRTREIVMPSRNYTPYTRVLELTMKKTLT</original>
    <variation>GRKGLKGRLKMSC</variation>
    <location>
        <begin position="402"/>
        <end position="466"/>
    </location>
</feature>
<feature type="splice variant" id="VSP_037395" description="In isoform 7." evidence="15">
    <original>NNELQSRLDYLTETQAKTEVETREIGVGCDLLPSQTGRTREIVMPSRNYTPYTRVLELTMKKTLT</original>
    <variation>VTFSTK</variation>
    <location>
        <begin position="402"/>
        <end position="466"/>
    </location>
</feature>
<feature type="splice variant" id="VSP_037397" description="In isoform 11." evidence="15">
    <original>SQTGRTREIVMPSRNYTPYTRVLELTMKKTLT</original>
    <variation>RLPFRQNDSSSHCQKSGSPISSEERRRRDKQHLDDITAARLLPLHHMPTQLLSIEESLALQKQQKQNYEEMQAKLAAQKLAERLNIKMRSYNPEGESSGRYREVRDEDDDWSSDEF</variation>
    <location>
        <begin position="435"/>
        <end position="466"/>
    </location>
</feature>
<feature type="splice variant" id="VSP_037398" description="In isoform 2." evidence="15">
    <original>SQTGRTREIVMPSRNYTPYTRVLELTMKKTLT</original>
    <variation>RRCKQSSQRKN</variation>
    <location>
        <begin position="435"/>
        <end position="466"/>
    </location>
</feature>
<feature type="splice variant" id="VSP_037396" description="In isoform 9." evidence="15">
    <original>SQTGRTREIVMPSRNYTPYTRVLELTMKKTLT</original>
    <variation>RQSRKFEKVLNEFVQLLPLPHHLLWAFGNVCWRRHFGLLQ</variation>
    <location>
        <begin position="435"/>
        <end position="466"/>
    </location>
</feature>
<feature type="sequence variant" id="VAR_089858" description="In CMD2K; likely pathogenic; loss of protein expression in homozygous patient cardiac tissue." evidence="13">
    <location>
        <begin position="79"/>
        <end position="466"/>
    </location>
</feature>
<feature type="sequence variant" id="VAR_089859" description="In CMD2K; likely pathogenic." evidence="14">
    <location>
        <begin position="117"/>
        <end position="466"/>
    </location>
</feature>
<feature type="sequence variant" id="VAR_089860" description="In CMD2K; likely pathogenic." evidence="12">
    <location>
        <begin position="130"/>
        <end position="466"/>
    </location>
</feature>
<feature type="sequence variant" id="VAR_055453" description="In dbSNP:rs16977629." evidence="5 8">
    <original>A</original>
    <variation>V</variation>
    <location>
        <position position="277"/>
    </location>
</feature>
<feature type="sequence variant" id="VAR_089861" description="In CMD2K; likely pathogenic." evidence="12">
    <location>
        <begin position="384"/>
        <end position="466"/>
    </location>
</feature>
<feature type="mutagenesis site" description="No effect on DYNLL1-binding; when associated with G-448." evidence="9">
    <original>Q</original>
    <variation>G</variation>
    <location>
        <position position="436"/>
    </location>
</feature>
<feature type="mutagenesis site" description="No effect on DYNLL1-binding; when associated with G-436." evidence="9">
    <original>R</original>
    <variation>G</variation>
    <location>
        <position position="448"/>
    </location>
</feature>
<feature type="mutagenesis site" description="No effect on DYNLL1-binding." evidence="9">
    <original>Y</original>
    <variation>G</variation>
    <location>
        <position position="450"/>
    </location>
</feature>
<feature type="sequence conflict" description="In Ref. 2; ADA68358." evidence="16" ref="2">
    <location>
        <begin position="144"/>
        <end position="146"/>
    </location>
</feature>
<feature type="strand" evidence="17">
    <location>
        <begin position="70"/>
        <end position="77"/>
    </location>
</feature>
<feature type="sequence variant" id="VAR_089862" description="In CMD2K; likely pathogenic." evidence="12">
    <location sequence="P0CAP1-11">
        <begin position="130"/>
        <end position="550"/>
    </location>
</feature>
<feature type="sequence variant" id="VAR_089863" description="In CMD2K; likely pathogenic." evidence="12">
    <location sequence="P0CAP1-11">
        <begin position="384"/>
        <end position="550"/>
    </location>
</feature>
<accession>P0CAP1</accession>
<accession>D2E9U7</accession>
<accession>Q6EER8</accession>
<accession>Q6EES2</accession>
<accession>Q6EEV3</accession>
<accession>Q6EF00</accession>
<accession>Q6EF01</accession>
<accession>Q6EF02</accession>
<accession>Q6EF46</accession>
<accession>Q6EFN8</accession>
<accession>Q6EM48</accession>
<accession>Q6K046</accession>
<accession>Q6K050</accession>
<accession>Q6K051</accession>
<accession>Q6ZQZ3</accession>
<accession>Q8NC58</accession>
<accession>Q8NCF3</accession>
<accession>Q96DI5</accession>
<accession>Q96JB7</accession>
<accession>Q96NF5</accession>
<proteinExistence type="evidence at protein level"/>
<reference key="1">
    <citation type="journal article" date="2004" name="Genomics">
        <title>The human GRINL1A gene defines a complex transcription unit, an unusual form of gene organization in eukaryotes.</title>
        <authorList>
            <person name="Roginski R.S."/>
            <person name="Mohan Raj B.K."/>
            <person name="Birditt B."/>
            <person name="Rowen L."/>
        </authorList>
    </citation>
    <scope>NUCLEOTIDE SEQUENCE [MRNA] (ISOFORMS 1; 2; 3; 4; 5; 6; 7; 8; 9; 10 AND 11)</scope>
    <scope>TISSUE SPECIFICITY</scope>
    <source>
        <tissue>Brain</tissue>
        <tissue>Lung</tissue>
    </source>
</reference>
<reference key="2">
    <citation type="journal article" date="2010" name="Circ. Res.">
        <title>Myozap, a novel intercalated disc protein, activates serum response factor-dependent signaling and is required to maintain cardiac function in vivo.</title>
        <authorList>
            <person name="Seeger T.S."/>
            <person name="Frank D."/>
            <person name="Rohr C."/>
            <person name="Will R."/>
            <person name="Just S."/>
            <person name="Grund C."/>
            <person name="Lyon R."/>
            <person name="Luedde M."/>
            <person name="Koegl M."/>
            <person name="Sheikh F."/>
            <person name="Rottbauer W."/>
            <person name="Franke W.W."/>
            <person name="Katus H.A."/>
            <person name="Olson E.N."/>
            <person name="Frey N."/>
        </authorList>
    </citation>
    <scope>NUCLEOTIDE SEQUENCE [MRNA]</scope>
    <scope>VARIANT VAL-277</scope>
    <scope>TISSUE SPECIFICITY</scope>
</reference>
<reference key="3">
    <citation type="journal article" date="2004" name="Nat. Genet.">
        <title>Complete sequencing and characterization of 21,243 full-length human cDNAs.</title>
        <authorList>
            <person name="Ota T."/>
            <person name="Suzuki Y."/>
            <person name="Nishikawa T."/>
            <person name="Otsuki T."/>
            <person name="Sugiyama T."/>
            <person name="Irie R."/>
            <person name="Wakamatsu A."/>
            <person name="Hayashi K."/>
            <person name="Sato H."/>
            <person name="Nagai K."/>
            <person name="Kimura K."/>
            <person name="Makita H."/>
            <person name="Sekine M."/>
            <person name="Obayashi M."/>
            <person name="Nishi T."/>
            <person name="Shibahara T."/>
            <person name="Tanaka T."/>
            <person name="Ishii S."/>
            <person name="Yamamoto J."/>
            <person name="Saito K."/>
            <person name="Kawai Y."/>
            <person name="Isono Y."/>
            <person name="Nakamura Y."/>
            <person name="Nagahari K."/>
            <person name="Murakami K."/>
            <person name="Yasuda T."/>
            <person name="Iwayanagi T."/>
            <person name="Wagatsuma M."/>
            <person name="Shiratori A."/>
            <person name="Sudo H."/>
            <person name="Hosoiri T."/>
            <person name="Kaku Y."/>
            <person name="Kodaira H."/>
            <person name="Kondo H."/>
            <person name="Sugawara M."/>
            <person name="Takahashi M."/>
            <person name="Kanda K."/>
            <person name="Yokoi T."/>
            <person name="Furuya T."/>
            <person name="Kikkawa E."/>
            <person name="Omura Y."/>
            <person name="Abe K."/>
            <person name="Kamihara K."/>
            <person name="Katsuta N."/>
            <person name="Sato K."/>
            <person name="Tanikawa M."/>
            <person name="Yamazaki M."/>
            <person name="Ninomiya K."/>
            <person name="Ishibashi T."/>
            <person name="Yamashita H."/>
            <person name="Murakawa K."/>
            <person name="Fujimori K."/>
            <person name="Tanai H."/>
            <person name="Kimata M."/>
            <person name="Watanabe M."/>
            <person name="Hiraoka S."/>
            <person name="Chiba Y."/>
            <person name="Ishida S."/>
            <person name="Ono Y."/>
            <person name="Takiguchi S."/>
            <person name="Watanabe S."/>
            <person name="Yosida M."/>
            <person name="Hotuta T."/>
            <person name="Kusano J."/>
            <person name="Kanehori K."/>
            <person name="Takahashi-Fujii A."/>
            <person name="Hara H."/>
            <person name="Tanase T.-O."/>
            <person name="Nomura Y."/>
            <person name="Togiya S."/>
            <person name="Komai F."/>
            <person name="Hara R."/>
            <person name="Takeuchi K."/>
            <person name="Arita M."/>
            <person name="Imose N."/>
            <person name="Musashino K."/>
            <person name="Yuuki H."/>
            <person name="Oshima A."/>
            <person name="Sasaki N."/>
            <person name="Aotsuka S."/>
            <person name="Yoshikawa Y."/>
            <person name="Matsunawa H."/>
            <person name="Ichihara T."/>
            <person name="Shiohata N."/>
            <person name="Sano S."/>
            <person name="Moriya S."/>
            <person name="Momiyama H."/>
            <person name="Satoh N."/>
            <person name="Takami S."/>
            <person name="Terashima Y."/>
            <person name="Suzuki O."/>
            <person name="Nakagawa S."/>
            <person name="Senoh A."/>
            <person name="Mizoguchi H."/>
            <person name="Goto Y."/>
            <person name="Shimizu F."/>
            <person name="Wakebe H."/>
            <person name="Hishigaki H."/>
            <person name="Watanabe T."/>
            <person name="Sugiyama A."/>
            <person name="Takemoto M."/>
            <person name="Kawakami B."/>
            <person name="Yamazaki M."/>
            <person name="Watanabe K."/>
            <person name="Kumagai A."/>
            <person name="Itakura S."/>
            <person name="Fukuzumi Y."/>
            <person name="Fujimori Y."/>
            <person name="Komiyama M."/>
            <person name="Tashiro H."/>
            <person name="Tanigami A."/>
            <person name="Fujiwara T."/>
            <person name="Ono T."/>
            <person name="Yamada K."/>
            <person name="Fujii Y."/>
            <person name="Ozaki K."/>
            <person name="Hirao M."/>
            <person name="Ohmori Y."/>
            <person name="Kawabata A."/>
            <person name="Hikiji T."/>
            <person name="Kobatake N."/>
            <person name="Inagaki H."/>
            <person name="Ikema Y."/>
            <person name="Okamoto S."/>
            <person name="Okitani R."/>
            <person name="Kawakami T."/>
            <person name="Noguchi S."/>
            <person name="Itoh T."/>
            <person name="Shigeta K."/>
            <person name="Senba T."/>
            <person name="Matsumura K."/>
            <person name="Nakajima Y."/>
            <person name="Mizuno T."/>
            <person name="Morinaga M."/>
            <person name="Sasaki M."/>
            <person name="Togashi T."/>
            <person name="Oyama M."/>
            <person name="Hata H."/>
            <person name="Watanabe M."/>
            <person name="Komatsu T."/>
            <person name="Mizushima-Sugano J."/>
            <person name="Satoh T."/>
            <person name="Shirai Y."/>
            <person name="Takahashi Y."/>
            <person name="Nakagawa K."/>
            <person name="Okumura K."/>
            <person name="Nagase T."/>
            <person name="Nomura N."/>
            <person name="Kikuchi H."/>
            <person name="Masuho Y."/>
            <person name="Yamashita R."/>
            <person name="Nakai K."/>
            <person name="Yada T."/>
            <person name="Nakamura Y."/>
            <person name="Ohara O."/>
            <person name="Isogai T."/>
            <person name="Sugano S."/>
        </authorList>
    </citation>
    <scope>NUCLEOTIDE SEQUENCE [LARGE SCALE MRNA] (ISOFORM 1)</scope>
    <scope>VARIANT VAL-277</scope>
    <source>
        <tissue>Heart</tissue>
    </source>
</reference>
<reference key="4">
    <citation type="journal article" date="2006" name="Nature">
        <title>Analysis of the DNA sequence and duplication history of human chromosome 15.</title>
        <authorList>
            <person name="Zody M.C."/>
            <person name="Garber M."/>
            <person name="Sharpe T."/>
            <person name="Young S.K."/>
            <person name="Rowen L."/>
            <person name="O'Neill K."/>
            <person name="Whittaker C.A."/>
            <person name="Kamal M."/>
            <person name="Chang J.L."/>
            <person name="Cuomo C.A."/>
            <person name="Dewar K."/>
            <person name="FitzGerald M.G."/>
            <person name="Kodira C.D."/>
            <person name="Madan A."/>
            <person name="Qin S."/>
            <person name="Yang X."/>
            <person name="Abbasi N."/>
            <person name="Abouelleil A."/>
            <person name="Arachchi H.M."/>
            <person name="Baradarani L."/>
            <person name="Birditt B."/>
            <person name="Bloom S."/>
            <person name="Bloom T."/>
            <person name="Borowsky M.L."/>
            <person name="Burke J."/>
            <person name="Butler J."/>
            <person name="Cook A."/>
            <person name="DeArellano K."/>
            <person name="DeCaprio D."/>
            <person name="Dorris L. III"/>
            <person name="Dors M."/>
            <person name="Eichler E.E."/>
            <person name="Engels R."/>
            <person name="Fahey J."/>
            <person name="Fleetwood P."/>
            <person name="Friedman C."/>
            <person name="Gearin G."/>
            <person name="Hall J.L."/>
            <person name="Hensley G."/>
            <person name="Johnson E."/>
            <person name="Jones C."/>
            <person name="Kamat A."/>
            <person name="Kaur A."/>
            <person name="Locke D.P."/>
            <person name="Madan A."/>
            <person name="Munson G."/>
            <person name="Jaffe D.B."/>
            <person name="Lui A."/>
            <person name="Macdonald P."/>
            <person name="Mauceli E."/>
            <person name="Naylor J.W."/>
            <person name="Nesbitt R."/>
            <person name="Nicol R."/>
            <person name="O'Leary S.B."/>
            <person name="Ratcliffe A."/>
            <person name="Rounsley S."/>
            <person name="She X."/>
            <person name="Sneddon K.M.B."/>
            <person name="Stewart S."/>
            <person name="Sougnez C."/>
            <person name="Stone S.M."/>
            <person name="Topham K."/>
            <person name="Vincent D."/>
            <person name="Wang S."/>
            <person name="Zimmer A.R."/>
            <person name="Birren B.W."/>
            <person name="Hood L."/>
            <person name="Lander E.S."/>
            <person name="Nusbaum C."/>
        </authorList>
    </citation>
    <scope>NUCLEOTIDE SEQUENCE [LARGE SCALE GENOMIC DNA]</scope>
</reference>
<reference key="5">
    <citation type="submission" date="2005-07" db="EMBL/GenBank/DDBJ databases">
        <authorList>
            <person name="Mural R.J."/>
            <person name="Istrail S."/>
            <person name="Sutton G.G."/>
            <person name="Florea L."/>
            <person name="Halpern A.L."/>
            <person name="Mobarry C.M."/>
            <person name="Lippert R."/>
            <person name="Walenz B."/>
            <person name="Shatkay H."/>
            <person name="Dew I."/>
            <person name="Miller J.R."/>
            <person name="Flanigan M.J."/>
            <person name="Edwards N.J."/>
            <person name="Bolanos R."/>
            <person name="Fasulo D."/>
            <person name="Halldorsson B.V."/>
            <person name="Hannenhalli S."/>
            <person name="Turner R."/>
            <person name="Yooseph S."/>
            <person name="Lu F."/>
            <person name="Nusskern D.R."/>
            <person name="Shue B.C."/>
            <person name="Zheng X.H."/>
            <person name="Zhong F."/>
            <person name="Delcher A.L."/>
            <person name="Huson D.H."/>
            <person name="Kravitz S.A."/>
            <person name="Mouchard L."/>
            <person name="Reinert K."/>
            <person name="Remington K.A."/>
            <person name="Clark A.G."/>
            <person name="Waterman M.S."/>
            <person name="Eichler E.E."/>
            <person name="Adams M.D."/>
            <person name="Hunkapiller M.W."/>
            <person name="Myers E.W."/>
            <person name="Venter J.C."/>
        </authorList>
    </citation>
    <scope>NUCLEOTIDE SEQUENCE [LARGE SCALE GENOMIC DNA]</scope>
</reference>
<reference key="6">
    <citation type="journal article" date="2004" name="Genome Res.">
        <title>The status, quality, and expansion of the NIH full-length cDNA project: the Mammalian Gene Collection (MGC).</title>
        <authorList>
            <consortium name="The MGC Project Team"/>
        </authorList>
    </citation>
    <scope>NUCLEOTIDE SEQUENCE [LARGE SCALE MRNA] (ISOFORM 1)</scope>
    <source>
        <tissue>Brain cortex</tissue>
    </source>
</reference>
<reference key="7">
    <citation type="journal article" date="2008" name="NeuroReport">
        <title>GRINL1A colocalizes with N-methyl D-aspartate receptor NR1 subunit and reduces N-methyl D-aspartate toxicity.</title>
        <authorList>
            <person name="Roginski R.S."/>
            <person name="Goubaeva F."/>
            <person name="Mikami M."/>
            <person name="Fried-Cassorla E."/>
            <person name="Nair M.R."/>
            <person name="Yang J."/>
        </authorList>
    </citation>
    <scope>INTERACTION WITH GRIN1</scope>
    <scope>SUBCELLULAR LOCATION</scope>
</reference>
<reference key="8">
    <citation type="journal article" date="2010" name="FEBS J.">
        <title>Structural basis for the interaction between dynein light chain 1 and the glutamate channel homolog GRINL1A.</title>
        <authorList>
            <person name="Garcia-Mayoral M.F."/>
            <person name="Martinez-Moreno M."/>
            <person name="Albar J.P."/>
            <person name="Rodriguez-Crespo I."/>
            <person name="Bruix M."/>
        </authorList>
    </citation>
    <scope>INTERACTION WITH DYNLL1</scope>
    <scope>MUTAGENESIS OF GLN-436; ARG-448 AND TYR-450</scope>
</reference>
<reference key="9">
    <citation type="journal article" date="2017" name="Clin. Exp. Dermatol.">
        <title>Patients with a new variant of endemic pemphigus foliaceus have autoantibodies against arrector pili muscle, colocalizing with MYZAP, p0071, desmoplakins 1 and 2 and ARVCF.</title>
        <authorList>
            <person name="Abreu-Velez A.M."/>
            <person name="Valencia-Yepes C.A."/>
            <person name="Upegui-Zapata Y.A."/>
            <person name="Upegui-Quiceno E."/>
            <person name="Mesa-Herrera N.R."/>
            <person name="Velazquez-Velez J.E."/>
            <person name="Howard M.S."/>
        </authorList>
    </citation>
    <scope>TISSUE SPECIFICITY</scope>
</reference>
<reference key="10">
    <citation type="journal article" date="2011" name="EMBO J.">
        <title>Cdc42-dependent formation of the ZO-1/MRCKbeta complex at the leading edge controls cell migration.</title>
        <authorList>
            <person name="Huo L."/>
            <person name="Wen W."/>
            <person name="Wang R."/>
            <person name="Kam C."/>
            <person name="Xia J."/>
            <person name="Feng W."/>
            <person name="Zhang M."/>
        </authorList>
    </citation>
    <scope>STRUCTURE BY NMR OF 70-79 IN COMPLEX WITH TJP1</scope>
    <scope>SUBCELLULAR LOCATION</scope>
    <scope>INTERACTION WITH TJP1</scope>
</reference>
<reference key="11">
    <citation type="journal article" date="2021" name="Front. Genet.">
        <title>GRINL1A complex transcription unit containing GCOM1, MYZAP, and POLR2M genes associates with fully penetrant recessive dilated cardiomyopathy.</title>
        <authorList>
            <person name="Helioe K."/>
            <person name="Maeyraenpaeae M.I."/>
            <person name="Saarinen I."/>
            <person name="Ahonen S."/>
            <person name="Junnila H."/>
            <person name="Tommiska J."/>
            <person name="Weckstroem S."/>
            <person name="Holmstroem M."/>
            <person name="Toivonen M."/>
            <person name="Nikus K."/>
            <person name="Hathaway J."/>
            <person name="Siivonen P."/>
            <person name="Muona M."/>
            <person name="Sistonen J."/>
            <person name="Salmenperae P."/>
            <person name="Gentile M."/>
            <person name="Paananen J."/>
            <person name="Myllykangas S."/>
            <person name="Alastalo T.P."/>
            <person name="Helioe T."/>
            <person name="Koskenvuo J."/>
        </authorList>
    </citation>
    <scope>VARIANTS CMD2K 130-ARG--THR-466 DEL AND 384-LYS--THR-466 DEL</scope>
    <scope>INVOLVEMENT IN CMD2K</scope>
</reference>
<reference key="12">
    <citation type="journal article" date="2022" name="Cold Spring Harb. Mol. Case Stud.">
        <title>A biallelic loss-of-function variant in MYZAP is associated with a recessive form of severe dilated cardiomyopathy.</title>
        <authorList>
            <person name="Maver A."/>
            <person name="Zigman T."/>
            <person name="Rangrez A.Y."/>
            <person name="Coric M."/>
            <person name="Homolak J."/>
            <person name="Saric D."/>
            <person name="Skific I."/>
            <person name="Udovicic M."/>
            <person name="Zekusic M."/>
            <person name="Saleem U."/>
            <person name="Laufer S.D."/>
            <person name="Hansen A."/>
            <person name="Frey N."/>
            <person name="Baric I."/>
            <person name="Peterlin B."/>
        </authorList>
    </citation>
    <scope>VARIANT CMD2K 79-SER--THR-466 DEL</scope>
    <scope>CHARACTERIZATION OF VARIANT CMD2K 79-SER--THR-466 DEL</scope>
    <scope>INVOLVEMENT IN CMD2K</scope>
</reference>
<reference key="13">
    <citation type="journal article" date="2024" name="Circ. Heart Fail.">
        <title>Biallelic Loss of Function Variants in Myocardial Zonula Adherens Protein Gene (MYZAP) Cause a Severe Recessive Form of Dilated Cardiomyopathy.</title>
        <authorList>
            <person name="Ochoa J.P."/>
            <person name="Lalaguna L."/>
            <person name="Mirelis J.G."/>
            <person name="Dominguez F."/>
            <person name="Gonzalez-Lopez E."/>
            <person name="Salas C."/>
            <person name="Roustan G."/>
            <person name="McGurk K.A."/>
            <person name="Zheng S.L."/>
            <person name="Barton P.J.R."/>
            <person name="Ware J.S."/>
            <person name="Gomez-Gaviro M.V."/>
            <person name="Lara-Pezzi E."/>
            <person name="Garcia-Pavia P."/>
        </authorList>
    </citation>
    <scope>VARIANT CMD2K 117-ARG--THR-466 DEL</scope>
    <scope>INVOLVEMENT IN CMD2K</scope>
</reference>
<comment type="function">
    <text evidence="1">Plays a role in cellular signaling via Rho-related GTP-binding proteins and subsequent activation of transcription factor SRF (By similarity). Targets TJP1 to cell junctions. In cortical neurons, may play a role in glutaminergic signal transduction through interaction with the NMDA receptor subunit GRIN1 (By similarity).</text>
</comment>
<comment type="subunit">
    <text evidence="1 7 9 10">Interacts with DSP, MPRIP and TJP1/ZO1. Interaction with MPRIP inhibits the activation of transcription factor SRF (By similarity). Interacts with GRIN1. Interacts with DYNLL1.</text>
</comment>
<comment type="interaction">
    <interactant intactId="EBI-7929343">
        <id>P0CAP1</id>
    </interactant>
    <interactant intactId="EBI-349105">
        <id>P63167</id>
        <label>DYNLL1</label>
    </interactant>
    <organismsDiffer>false</organismsDiffer>
    <experiments>6</experiments>
</comment>
<comment type="subcellular location">
    <subcellularLocation>
        <location evidence="2">Cytoplasm</location>
        <location evidence="2">Cytoskeleton</location>
    </subcellularLocation>
    <subcellularLocation>
        <location evidence="2">Cell membrane</location>
        <topology evidence="2">Peripheral membrane protein</topology>
        <orientation evidence="2">Cytoplasmic side</orientation>
    </subcellularLocation>
    <subcellularLocation>
        <location evidence="2">Cytoplasm</location>
        <location evidence="2">Myofibril</location>
        <location evidence="2">Sarcomere</location>
        <location evidence="2">I band</location>
    </subcellularLocation>
    <subcellularLocation>
        <location evidence="2">Cytoplasm</location>
        <location evidence="2">Myofibril</location>
        <location evidence="2">Sarcomere</location>
        <location evidence="2">Z line</location>
    </subcellularLocation>
    <subcellularLocation>
        <location evidence="7 10">Cell junction</location>
    </subcellularLocation>
    <text evidence="2">Detected predominantly at the intercalated disk in cardiomyocytes, and at low levels on sarcomeric Z disks. Colocalizes with F-actin. Colocalizes with cortical actin.</text>
</comment>
<comment type="alternative products">
    <event type="alternative splicing"/>
    <isoform>
        <id>P0CAP1-1</id>
        <name>1</name>
        <name>Gcom8</name>
        <name>Gup1</name>
        <sequence type="displayed"/>
    </isoform>
    <isoform>
        <id>P0CAP1-2</id>
        <name>2</name>
        <name>Gcom2</name>
        <sequence type="described" ref="VSP_037398"/>
    </isoform>
    <isoform>
        <id>P0CAP1-3</id>
        <name>3</name>
        <name>Gcom13</name>
        <sequence type="described" ref="VSP_037390"/>
    </isoform>
    <isoform>
        <id>P0CAP1-4</id>
        <name>4</name>
        <name>Gcom9</name>
        <name>Gup2</name>
        <sequence type="described" ref="VSP_037392"/>
    </isoform>
    <isoform>
        <id>P0CAP1-5</id>
        <name>5</name>
        <name>Gcom10</name>
        <sequence type="described" ref="VSP_037393"/>
    </isoform>
    <isoform>
        <id>P0CAP1-6</id>
        <name>6</name>
        <name>Gcom3</name>
        <sequence type="described" ref="VSP_037394"/>
    </isoform>
    <isoform>
        <id>P0CAP1-7</id>
        <name>7</name>
        <name>Gcom4</name>
        <sequence type="described" ref="VSP_037395"/>
    </isoform>
    <isoform>
        <id>P0CAP1-8</id>
        <name>8</name>
        <name>Gcom5</name>
        <sequence type="described" ref="VSP_037391"/>
    </isoform>
    <isoform>
        <id>P0CAP1-9</id>
        <name>9</name>
        <name>Gcom6</name>
        <sequence type="described" ref="VSP_037390 VSP_037392 VSP_037396"/>
    </isoform>
    <isoform>
        <id>P0CAP1-10</id>
        <name>10</name>
        <name>Gcom11</name>
        <sequence type="described" ref="VSP_037389"/>
    </isoform>
    <isoform>
        <id>P0CAP1-11</id>
        <name>11</name>
        <name>Gcom1</name>
        <name>GRINL1A complex locus protein 1</name>
        <sequence type="described" ref="VSP_037397"/>
    </isoform>
    <text>Additional isoforms seem to exist.</text>
</comment>
<comment type="tissue specificity">
    <text evidence="6 8 11">Detected in heart, liver, skeletal muscle, placenta, small intestine, lung, prostate and testis. Expressed in arrector pili muscle (at protein level) (PubMed:29034528).</text>
</comment>
<comment type="disease" evidence="12 13 14">
    <disease id="DI-06924">
        <name>Cardiomyopathy, dilated, 2K</name>
        <acronym>CMD2K</acronym>
        <description>A form of dilated cardiomyopathy, a disorder characterized by ventricular dilation and impaired systolic function, resulting in congestive heart failure and arrhythmia. Patients are at risk of premature death. CMD2K is an autosomal recessive form characterized by predominantly left ventricular involvement, although patients with biventricular disease have been observed.</description>
        <dbReference type="MIM" id="620894"/>
    </disease>
    <text>The disease is caused by variants affecting the gene represented in this entry.</text>
</comment>
<comment type="miscellaneous">
    <text>The adjacent MYZAP and POLR2M genes are part of a complex transcription unit. The respective transcripts derive from different promoters and are alternatively spliced. In human, some transcripts of the upstream promoter of MYZAP use exons of the downstream POLR2M gene.</text>
</comment>
<comment type="miscellaneous">
    <molecule>Isoform 11</molecule>
    <text evidence="16">Based on a naturally occurring readthrough transcript which produces a MYZAP-POLR2M fusion protein.</text>
</comment>
<comment type="similarity">
    <text evidence="16">Belongs to the MYZAP family.</text>
</comment>
<sequence length="466" mass="54206">MLRSTSTVTLLSGGAARTPGAPSRRANVCRLRLTVPPESPVPEQCEKKIERKEQLLDLSNGEPTRKLPQGVVYGVVRRSDQNQQKEMVVYGWSTSQLKEEMNYIKDVRATLEKVRKRMYGDYDEMRQKIRQLTQELSVSHAQQEYLENHIQTQSSALDRFNAMNSALASDSIGLQKTLVDVTLENSNIKDQIRNLQQTYEASMDKLREKQRQLEVAQVENQLLKMKVESSQEANAEVMREMTKKLYSQYEEKLQEEQRKHSAEKEALLEETNSFLKAIEEANKKMQAAEISLEEKDQRIGELDRLIERMEKERHQLQLQLLEHETEMSGELTDSDKERYQQLEEASASLRERIRHLDDMVHCQQKKVKQMVEEIESLKKKLQQKQLLILQLLEKISFLEGENNELQSRLDYLTETQAKTEVETREIGVGCDLLPSQTGRTREIVMPSRNYTPYTRVLELTMKKTLT</sequence>
<gene>
    <name type="primary">MYZAP</name>
    <name type="synonym">MYOZAP</name>
</gene>
<keyword id="KW-0002">3D-structure</keyword>
<keyword id="KW-0025">Alternative splicing</keyword>
<keyword id="KW-0122">Cardiomyopathy</keyword>
<keyword id="KW-0965">Cell junction</keyword>
<keyword id="KW-1003">Cell membrane</keyword>
<keyword id="KW-0175">Coiled coil</keyword>
<keyword id="KW-0963">Cytoplasm</keyword>
<keyword id="KW-0206">Cytoskeleton</keyword>
<keyword id="KW-0225">Disease variant</keyword>
<keyword id="KW-0472">Membrane</keyword>
<keyword id="KW-1267">Proteomics identification</keyword>
<keyword id="KW-1185">Reference proteome</keyword>
<keyword id="KW-0732">Signal</keyword>
<name>MYZAP_HUMAN</name>
<evidence type="ECO:0000250" key="1"/>
<evidence type="ECO:0000250" key="2">
    <source>
        <dbReference type="UniProtKB" id="Q5EB94"/>
    </source>
</evidence>
<evidence type="ECO:0000255" key="3"/>
<evidence type="ECO:0000256" key="4">
    <source>
        <dbReference type="SAM" id="MobiDB-lite"/>
    </source>
</evidence>
<evidence type="ECO:0000269" key="5">
    <source>
    </source>
</evidence>
<evidence type="ECO:0000269" key="6">
    <source>
    </source>
</evidence>
<evidence type="ECO:0000269" key="7">
    <source>
    </source>
</evidence>
<evidence type="ECO:0000269" key="8">
    <source>
    </source>
</evidence>
<evidence type="ECO:0000269" key="9">
    <source>
    </source>
</evidence>
<evidence type="ECO:0000269" key="10">
    <source>
    </source>
</evidence>
<evidence type="ECO:0000269" key="11">
    <source>
    </source>
</evidence>
<evidence type="ECO:0000269" key="12">
    <source>
    </source>
</evidence>
<evidence type="ECO:0000269" key="13">
    <source>
    </source>
</evidence>
<evidence type="ECO:0000269" key="14">
    <source>
    </source>
</evidence>
<evidence type="ECO:0000303" key="15">
    <source>
    </source>
</evidence>
<evidence type="ECO:0000305" key="16"/>
<evidence type="ECO:0007829" key="17">
    <source>
        <dbReference type="PDB" id="2KXS"/>
    </source>
</evidence>
<dbReference type="EMBL" id="AY207007">
    <property type="protein sequence ID" value="AAO39707.1"/>
    <property type="molecule type" value="mRNA"/>
</dbReference>
<dbReference type="EMBL" id="AY207459">
    <property type="protein sequence ID" value="AAP41548.1"/>
    <property type="molecule type" value="mRNA"/>
</dbReference>
<dbReference type="EMBL" id="AY208913">
    <property type="protein sequence ID" value="AAP41549.1"/>
    <property type="molecule type" value="mRNA"/>
</dbReference>
<dbReference type="EMBL" id="AY237639">
    <property type="protein sequence ID" value="AAP75897.1"/>
    <property type="molecule type" value="mRNA"/>
</dbReference>
<dbReference type="EMBL" id="AY331564">
    <property type="protein sequence ID" value="AAQ76825.1"/>
    <property type="molecule type" value="mRNA"/>
</dbReference>
<dbReference type="EMBL" id="AY333779">
    <property type="protein sequence ID" value="AAQ76826.1"/>
    <property type="molecule type" value="mRNA"/>
</dbReference>
<dbReference type="EMBL" id="AY334560">
    <property type="protein sequence ID" value="AAQ76827.1"/>
    <property type="molecule type" value="mRNA"/>
</dbReference>
<dbReference type="EMBL" id="AY334561">
    <property type="protein sequence ID" value="AAQ76828.1"/>
    <property type="molecule type" value="mRNA"/>
</dbReference>
<dbReference type="EMBL" id="AY334562">
    <property type="protein sequence ID" value="AAQ76829.1"/>
    <property type="molecule type" value="mRNA"/>
</dbReference>
<dbReference type="EMBL" id="AY341345">
    <property type="protein sequence ID" value="AAQ76831.1"/>
    <property type="molecule type" value="mRNA"/>
</dbReference>
<dbReference type="EMBL" id="AY353056">
    <property type="protein sequence ID" value="AAQ76832.1"/>
    <property type="molecule type" value="mRNA"/>
</dbReference>
<dbReference type="EMBL" id="AY353057">
    <property type="protein sequence ID" value="AAQ76833.1"/>
    <property type="molecule type" value="mRNA"/>
</dbReference>
<dbReference type="EMBL" id="AY353058">
    <property type="protein sequence ID" value="AAQ76834.1"/>
    <property type="molecule type" value="mRNA"/>
</dbReference>
<dbReference type="EMBL" id="AY353060">
    <property type="protein sequence ID" value="AAQ76836.1"/>
    <property type="molecule type" value="mRNA"/>
</dbReference>
<dbReference type="EMBL" id="FJ970029">
    <property type="protein sequence ID" value="ADA68358.1"/>
    <property type="molecule type" value="mRNA"/>
</dbReference>
<dbReference type="EMBL" id="AK055535">
    <property type="protein sequence ID" value="BAB70944.1"/>
    <property type="molecule type" value="mRNA"/>
</dbReference>
<dbReference type="EMBL" id="AC025271">
    <property type="status" value="NOT_ANNOTATED_CDS"/>
    <property type="molecule type" value="Genomic_DNA"/>
</dbReference>
<dbReference type="EMBL" id="AC090651">
    <property type="status" value="NOT_ANNOTATED_CDS"/>
    <property type="molecule type" value="Genomic_DNA"/>
</dbReference>
<dbReference type="EMBL" id="CH471082">
    <property type="protein sequence ID" value="EAW77522.1"/>
    <property type="molecule type" value="Genomic_DNA"/>
</dbReference>
<dbReference type="EMBL" id="CH471082">
    <property type="protein sequence ID" value="EAW77527.1"/>
    <property type="molecule type" value="Genomic_DNA"/>
</dbReference>
<dbReference type="EMBL" id="BC101645">
    <property type="protein sequence ID" value="AAI01646.1"/>
    <property type="molecule type" value="mRNA"/>
</dbReference>
<dbReference type="EMBL" id="BC112148">
    <property type="protein sequence ID" value="AAI12149.1"/>
    <property type="molecule type" value="mRNA"/>
</dbReference>
<dbReference type="CCDS" id="CCDS10162.1">
    <molecule id="P0CAP1-1"/>
</dbReference>
<dbReference type="CCDS" id="CCDS42044.1">
    <molecule id="P0CAP1-4"/>
</dbReference>
<dbReference type="RefSeq" id="NP_001018100.1">
    <molecule id="P0CAP1-11"/>
    <property type="nucleotide sequence ID" value="NM_001018090.6"/>
</dbReference>
<dbReference type="RefSeq" id="NP_001018101.1">
    <molecule id="P0CAP1-2"/>
    <property type="nucleotide sequence ID" value="NM_001018091.6"/>
</dbReference>
<dbReference type="RefSeq" id="NP_001018110.1">
    <molecule id="P0CAP1-1"/>
    <property type="nucleotide sequence ID" value="NM_001018100.5"/>
</dbReference>
<dbReference type="RefSeq" id="NP_689664.3">
    <molecule id="P0CAP1-4"/>
    <property type="nucleotide sequence ID" value="NM_152451.8"/>
</dbReference>
<dbReference type="PDB" id="2KXS">
    <property type="method" value="NMR"/>
    <property type="chains" value="A=70-79"/>
</dbReference>
<dbReference type="PDBsum" id="2KXS"/>
<dbReference type="SMR" id="P0CAP1"/>
<dbReference type="BioGRID" id="123498">
    <property type="interactions" value="137"/>
</dbReference>
<dbReference type="BioGRID" id="126937">
    <property type="interactions" value="12"/>
</dbReference>
<dbReference type="BioGRID" id="1530817">
    <property type="interactions" value="1"/>
</dbReference>
<dbReference type="FunCoup" id="P0CAP1">
    <property type="interactions" value="147"/>
</dbReference>
<dbReference type="IntAct" id="P0CAP1">
    <property type="interactions" value="64"/>
</dbReference>
<dbReference type="MINT" id="P0CAP1"/>
<dbReference type="STRING" id="9606.ENSP00000267853"/>
<dbReference type="GlyGen" id="P0CAP1">
    <property type="glycosylation" value="2 sites, 1 N-linked glycan (1 site), 1 O-linked glycan (1 site)"/>
</dbReference>
<dbReference type="iPTMnet" id="P0CAP1"/>
<dbReference type="PhosphoSitePlus" id="P0CAP1"/>
<dbReference type="BioMuta" id="MYZAP"/>
<dbReference type="DMDM" id="238064959"/>
<dbReference type="jPOST" id="P0CAP1"/>
<dbReference type="MassIVE" id="P0CAP1"/>
<dbReference type="PaxDb" id="9606-ENSP00000267853"/>
<dbReference type="PeptideAtlas" id="P0CAP1"/>
<dbReference type="ProteomicsDB" id="52417">
    <molecule id="P0CAP1-1"/>
</dbReference>
<dbReference type="ProteomicsDB" id="52418">
    <molecule id="P0CAP1-10"/>
</dbReference>
<dbReference type="ProteomicsDB" id="52419">
    <molecule id="P0CAP1-11"/>
</dbReference>
<dbReference type="ProteomicsDB" id="52420">
    <molecule id="P0CAP1-2"/>
</dbReference>
<dbReference type="ProteomicsDB" id="52421">
    <molecule id="P0CAP1-3"/>
</dbReference>
<dbReference type="ProteomicsDB" id="52422">
    <molecule id="P0CAP1-4"/>
</dbReference>
<dbReference type="ProteomicsDB" id="52423">
    <molecule id="P0CAP1-5"/>
</dbReference>
<dbReference type="ProteomicsDB" id="52424">
    <molecule id="P0CAP1-6"/>
</dbReference>
<dbReference type="ProteomicsDB" id="52425">
    <molecule id="P0CAP1-7"/>
</dbReference>
<dbReference type="ProteomicsDB" id="52426">
    <molecule id="P0CAP1-8"/>
</dbReference>
<dbReference type="ProteomicsDB" id="52427">
    <molecule id="P0CAP1-9"/>
</dbReference>
<dbReference type="TopDownProteomics" id="P0CAP1-7">
    <molecule id="P0CAP1-7"/>
</dbReference>
<dbReference type="Antibodypedia" id="70823">
    <property type="antibodies" value="31 antibodies from 13 providers"/>
</dbReference>
<dbReference type="DNASU" id="81488"/>
<dbReference type="Ensembl" id="ENST00000267853.10">
    <molecule id="P0CAP1-1"/>
    <property type="protein sequence ID" value="ENSP00000267853.5"/>
    <property type="gene ID" value="ENSG00000263155.7"/>
</dbReference>
<dbReference type="Ensembl" id="ENST00000380565.8">
    <molecule id="P0CAP1-4"/>
    <property type="protein sequence ID" value="ENSP00000369939.4"/>
    <property type="gene ID" value="ENSG00000263155.7"/>
</dbReference>
<dbReference type="Ensembl" id="ENST00000649429.1">
    <molecule id="P0CAP1-5"/>
    <property type="protein sequence ID" value="ENSP00000497390.1"/>
    <property type="gene ID" value="ENSG00000263155.7"/>
</dbReference>
<dbReference type="GeneID" id="100820829"/>
<dbReference type="GeneID" id="145781"/>
<dbReference type="KEGG" id="hsa:100820829"/>
<dbReference type="KEGG" id="hsa:145781"/>
<dbReference type="MANE-Select" id="ENST00000267853.10">
    <property type="protein sequence ID" value="ENSP00000267853.5"/>
    <property type="RefSeq nucleotide sequence ID" value="NM_001018100.5"/>
    <property type="RefSeq protein sequence ID" value="NP_001018110.1"/>
</dbReference>
<dbReference type="UCSC" id="uc002aei.4">
    <molecule id="P0CAP1-1"/>
    <property type="organism name" value="human"/>
</dbReference>
<dbReference type="AGR" id="HGNC:14862"/>
<dbReference type="AGR" id="HGNC:26424"/>
<dbReference type="AGR" id="HGNC:43444"/>
<dbReference type="CTD" id="100820829"/>
<dbReference type="CTD" id="145781"/>
<dbReference type="CTD" id="81488"/>
<dbReference type="DisGeNET" id="100820829"/>
<dbReference type="DisGeNET" id="145781"/>
<dbReference type="DisGeNET" id="81488"/>
<dbReference type="GeneCards" id="MYZAP"/>
<dbReference type="HGNC" id="HGNC:43444">
    <property type="gene designation" value="MYZAP"/>
</dbReference>
<dbReference type="HPA" id="ENSG00000263155">
    <property type="expression patterns" value="Tissue enriched (heart)"/>
</dbReference>
<dbReference type="MalaCards" id="MYZAP"/>
<dbReference type="MIM" id="614071">
    <property type="type" value="gene"/>
</dbReference>
<dbReference type="MIM" id="620894">
    <property type="type" value="phenotype"/>
</dbReference>
<dbReference type="neXtProt" id="NX_P0CAP1"/>
<dbReference type="OpenTargets" id="ENSG00000137878"/>
<dbReference type="OpenTargets" id="ENSG00000263155"/>
<dbReference type="PharmGKB" id="PA28986"/>
<dbReference type="VEuPathDB" id="HostDB:ENSG00000263155"/>
<dbReference type="eggNOG" id="ENOG502QSEE">
    <property type="taxonomic scope" value="Eukaryota"/>
</dbReference>
<dbReference type="GeneTree" id="ENSGT00950000183065"/>
<dbReference type="HOGENOM" id="CLU_022112_0_0_1"/>
<dbReference type="InParanoid" id="P0CAP1"/>
<dbReference type="OMA" id="CMGMEKS"/>
<dbReference type="OrthoDB" id="8788688at2759"/>
<dbReference type="PAN-GO" id="P0CAP1">
    <property type="GO annotations" value="3 GO annotations based on evolutionary models"/>
</dbReference>
<dbReference type="PhylomeDB" id="P0CAP1"/>
<dbReference type="PathwayCommons" id="P0CAP1"/>
<dbReference type="SignaLink" id="P0CAP1"/>
<dbReference type="BioGRID-ORCS" id="100820829">
    <property type="hits" value="7 hits in 682 CRISPR screens"/>
</dbReference>
<dbReference type="BioGRID-ORCS" id="145781">
    <property type="hits" value="18 hits in 677 CRISPR screens"/>
</dbReference>
<dbReference type="BioGRID-ORCS" id="81488">
    <property type="hits" value="155 hits in 1107 CRISPR screens"/>
</dbReference>
<dbReference type="EvolutionaryTrace" id="P0CAP1"/>
<dbReference type="GeneWiki" id="GRINL1A"/>
<dbReference type="Pharos" id="P0CAP1">
    <property type="development level" value="Tdark"/>
</dbReference>
<dbReference type="PRO" id="PR:P0CAP1"/>
<dbReference type="Proteomes" id="UP000005640">
    <property type="component" value="Chromosome 15"/>
</dbReference>
<dbReference type="RNAct" id="P0CAP1">
    <property type="molecule type" value="protein"/>
</dbReference>
<dbReference type="Bgee" id="ENSG00000263155">
    <property type="expression patterns" value="Expressed in left ventricle myocardium and 160 other cell types or tissues"/>
</dbReference>
<dbReference type="ExpressionAtlas" id="P0CAP1">
    <property type="expression patterns" value="baseline and differential"/>
</dbReference>
<dbReference type="GO" id="GO:0070161">
    <property type="term" value="C:anchoring junction"/>
    <property type="evidence" value="ECO:0007669"/>
    <property type="project" value="UniProtKB-SubCell"/>
</dbReference>
<dbReference type="GO" id="GO:0030864">
    <property type="term" value="C:cortical actin cytoskeleton"/>
    <property type="evidence" value="ECO:0007669"/>
    <property type="project" value="Ensembl"/>
</dbReference>
<dbReference type="GO" id="GO:0009898">
    <property type="term" value="C:cytoplasmic side of plasma membrane"/>
    <property type="evidence" value="ECO:0000250"/>
    <property type="project" value="UniProtKB"/>
</dbReference>
<dbReference type="GO" id="GO:0031674">
    <property type="term" value="C:I band"/>
    <property type="evidence" value="ECO:0000250"/>
    <property type="project" value="UniProtKB"/>
</dbReference>
<dbReference type="GO" id="GO:0005665">
    <property type="term" value="C:RNA polymerase II, core complex"/>
    <property type="evidence" value="ECO:0000318"/>
    <property type="project" value="GO_Central"/>
</dbReference>
<dbReference type="GO" id="GO:0030018">
    <property type="term" value="C:Z disc"/>
    <property type="evidence" value="ECO:0007669"/>
    <property type="project" value="UniProtKB-SubCell"/>
</dbReference>
<dbReference type="GO" id="GO:0035556">
    <property type="term" value="P:intracellular signal transduction"/>
    <property type="evidence" value="ECO:0000250"/>
    <property type="project" value="UniProtKB"/>
</dbReference>
<dbReference type="InterPro" id="IPR051375">
    <property type="entry name" value="Tuftelin_GRINL1A/MYZAP/CCD68"/>
</dbReference>
<dbReference type="PANTHER" id="PTHR23171">
    <property type="entry name" value="GDOWN1"/>
    <property type="match status" value="1"/>
</dbReference>
<dbReference type="PANTHER" id="PTHR23171:SF2">
    <property type="entry name" value="MYOCARDIAL ZONULA ADHERENS PROTEIN"/>
    <property type="match status" value="1"/>
</dbReference>